<dbReference type="EMBL" id="CP000469">
    <property type="protein sequence ID" value="ABK47660.1"/>
    <property type="molecule type" value="Genomic_DNA"/>
</dbReference>
<dbReference type="RefSeq" id="WP_011716493.1">
    <property type="nucleotide sequence ID" value="NC_008577.1"/>
</dbReference>
<dbReference type="SMR" id="A0KV41"/>
<dbReference type="STRING" id="94122.Shewana3_1426"/>
<dbReference type="KEGG" id="shn:Shewana3_1426"/>
<dbReference type="eggNOG" id="COG3633">
    <property type="taxonomic scope" value="Bacteria"/>
</dbReference>
<dbReference type="HOGENOM" id="CLU_044581_0_0_6"/>
<dbReference type="OrthoDB" id="9768885at2"/>
<dbReference type="Proteomes" id="UP000002589">
    <property type="component" value="Chromosome"/>
</dbReference>
<dbReference type="GO" id="GO:0005886">
    <property type="term" value="C:plasma membrane"/>
    <property type="evidence" value="ECO:0007669"/>
    <property type="project" value="UniProtKB-SubCell"/>
</dbReference>
<dbReference type="GO" id="GO:0005295">
    <property type="term" value="F:neutral L-amino acid:sodium symporter activity"/>
    <property type="evidence" value="ECO:0007669"/>
    <property type="project" value="TreeGrafter"/>
</dbReference>
<dbReference type="GO" id="GO:0032329">
    <property type="term" value="P:serine transport"/>
    <property type="evidence" value="ECO:0007669"/>
    <property type="project" value="InterPro"/>
</dbReference>
<dbReference type="GO" id="GO:0015826">
    <property type="term" value="P:threonine transport"/>
    <property type="evidence" value="ECO:0007669"/>
    <property type="project" value="InterPro"/>
</dbReference>
<dbReference type="FunFam" id="1.10.3860.10:FF:000003">
    <property type="entry name" value="Serine/threonine transporter sstT"/>
    <property type="match status" value="1"/>
</dbReference>
<dbReference type="Gene3D" id="1.10.3860.10">
    <property type="entry name" value="Sodium:dicarboxylate symporter"/>
    <property type="match status" value="1"/>
</dbReference>
<dbReference type="HAMAP" id="MF_01582">
    <property type="entry name" value="Ser_Thr_transp_SstT"/>
    <property type="match status" value="1"/>
</dbReference>
<dbReference type="InterPro" id="IPR001991">
    <property type="entry name" value="Na-dicarboxylate_symporter"/>
</dbReference>
<dbReference type="InterPro" id="IPR036458">
    <property type="entry name" value="Na:dicarbo_symporter_sf"/>
</dbReference>
<dbReference type="InterPro" id="IPR023025">
    <property type="entry name" value="Ser_Thr_transp_SstT"/>
</dbReference>
<dbReference type="NCBIfam" id="NF010151">
    <property type="entry name" value="PRK13628.1"/>
    <property type="match status" value="1"/>
</dbReference>
<dbReference type="PANTHER" id="PTHR42865">
    <property type="entry name" value="PROTON/GLUTAMATE-ASPARTATE SYMPORTER"/>
    <property type="match status" value="1"/>
</dbReference>
<dbReference type="PANTHER" id="PTHR42865:SF8">
    <property type="entry name" value="SERINE_THREONINE TRANSPORTER SSTT"/>
    <property type="match status" value="1"/>
</dbReference>
<dbReference type="Pfam" id="PF00375">
    <property type="entry name" value="SDF"/>
    <property type="match status" value="1"/>
</dbReference>
<dbReference type="PRINTS" id="PR00173">
    <property type="entry name" value="EDTRNSPORT"/>
</dbReference>
<dbReference type="SUPFAM" id="SSF118215">
    <property type="entry name" value="Proton glutamate symport protein"/>
    <property type="match status" value="1"/>
</dbReference>
<organism>
    <name type="scientific">Shewanella sp. (strain ANA-3)</name>
    <dbReference type="NCBI Taxonomy" id="94122"/>
    <lineage>
        <taxon>Bacteria</taxon>
        <taxon>Pseudomonadati</taxon>
        <taxon>Pseudomonadota</taxon>
        <taxon>Gammaproteobacteria</taxon>
        <taxon>Alteromonadales</taxon>
        <taxon>Shewanellaceae</taxon>
        <taxon>Shewanella</taxon>
    </lineage>
</organism>
<accession>A0KV41</accession>
<comment type="function">
    <text evidence="1">Involved in the import of serine and threonine into the cell, with the concomitant import of sodium (symport system).</text>
</comment>
<comment type="catalytic activity">
    <reaction evidence="1">
        <text>L-serine(in) + Na(+)(in) = L-serine(out) + Na(+)(out)</text>
        <dbReference type="Rhea" id="RHEA:29575"/>
        <dbReference type="ChEBI" id="CHEBI:29101"/>
        <dbReference type="ChEBI" id="CHEBI:33384"/>
    </reaction>
    <physiologicalReaction direction="right-to-left" evidence="1">
        <dbReference type="Rhea" id="RHEA:29577"/>
    </physiologicalReaction>
</comment>
<comment type="catalytic activity">
    <reaction evidence="1">
        <text>L-threonine(in) + Na(+)(in) = L-threonine(out) + Na(+)(out)</text>
        <dbReference type="Rhea" id="RHEA:69999"/>
        <dbReference type="ChEBI" id="CHEBI:29101"/>
        <dbReference type="ChEBI" id="CHEBI:57926"/>
    </reaction>
    <physiologicalReaction direction="right-to-left" evidence="1">
        <dbReference type="Rhea" id="RHEA:70001"/>
    </physiologicalReaction>
</comment>
<comment type="subcellular location">
    <subcellularLocation>
        <location evidence="1">Cell inner membrane</location>
        <topology evidence="1">Multi-pass membrane protein</topology>
    </subcellularLocation>
</comment>
<comment type="similarity">
    <text evidence="1">Belongs to the dicarboxylate/amino acid:cation symporter (DAACS) (TC 2.A.23) family.</text>
</comment>
<sequence length="408" mass="42037">MKQESSLLAKLANGSLVLQILVGIIAGVSLASFSHEAAKQVAFLGSLFVGALKAIAPILVFILVASSIANQKKNTQTNMRPIVVLYLFGTFAAALTAVVLSMMFPTNLVLVAGVEGTSPPQGIGEVINTLLFKLVDNPVNALMTGNYIGILAWGVGLGLALHHASDSTKQVFADVSHGISQMVRFIIRLAPIGIFGLVAATFAETGFAAIAGYAKLLAVLLGAMAIIALIVNPLIVYVKIKRNPYPLVIRCLRESGVTAFFTRSSAANIPVNMALCEKLKLHEDTYSVSIPLGATINMGGAAITITVLTLAAAHTLGIQVDLLTALLLSVVAAISACGASGVAGGSLLLIPLACSLFGISNDVAMQVVAVGFIIGVIQDAAETALNSSTDVIFTAAACEAAENKAKLG</sequence>
<proteinExistence type="inferred from homology"/>
<reference key="1">
    <citation type="submission" date="2006-09" db="EMBL/GenBank/DDBJ databases">
        <title>Complete sequence of chromosome 1 of Shewanella sp. ANA-3.</title>
        <authorList>
            <person name="Copeland A."/>
            <person name="Lucas S."/>
            <person name="Lapidus A."/>
            <person name="Barry K."/>
            <person name="Detter J.C."/>
            <person name="Glavina del Rio T."/>
            <person name="Hammon N."/>
            <person name="Israni S."/>
            <person name="Dalin E."/>
            <person name="Tice H."/>
            <person name="Pitluck S."/>
            <person name="Chertkov O."/>
            <person name="Brettin T."/>
            <person name="Bruce D."/>
            <person name="Han C."/>
            <person name="Tapia R."/>
            <person name="Gilna P."/>
            <person name="Schmutz J."/>
            <person name="Larimer F."/>
            <person name="Land M."/>
            <person name="Hauser L."/>
            <person name="Kyrpides N."/>
            <person name="Kim E."/>
            <person name="Newman D."/>
            <person name="Salticov C."/>
            <person name="Konstantinidis K."/>
            <person name="Klappenback J."/>
            <person name="Tiedje J."/>
            <person name="Richardson P."/>
        </authorList>
    </citation>
    <scope>NUCLEOTIDE SEQUENCE [LARGE SCALE GENOMIC DNA]</scope>
    <source>
        <strain>ANA-3</strain>
    </source>
</reference>
<name>SSTT_SHESA</name>
<gene>
    <name evidence="1" type="primary">sstT</name>
    <name type="ordered locus">Shewana3_1426</name>
</gene>
<keyword id="KW-0029">Amino-acid transport</keyword>
<keyword id="KW-0997">Cell inner membrane</keyword>
<keyword id="KW-1003">Cell membrane</keyword>
<keyword id="KW-0472">Membrane</keyword>
<keyword id="KW-0769">Symport</keyword>
<keyword id="KW-0812">Transmembrane</keyword>
<keyword id="KW-1133">Transmembrane helix</keyword>
<keyword id="KW-0813">Transport</keyword>
<evidence type="ECO:0000255" key="1">
    <source>
        <dbReference type="HAMAP-Rule" id="MF_01582"/>
    </source>
</evidence>
<protein>
    <recommendedName>
        <fullName evidence="1">Serine/threonine transporter SstT</fullName>
    </recommendedName>
    <alternativeName>
        <fullName evidence="1">Na(+)/serine-threonine symporter</fullName>
    </alternativeName>
</protein>
<feature type="chain" id="PRO_0000309125" description="Serine/threonine transporter SstT">
    <location>
        <begin position="1"/>
        <end position="408"/>
    </location>
</feature>
<feature type="transmembrane region" description="Helical" evidence="1">
    <location>
        <begin position="11"/>
        <end position="31"/>
    </location>
</feature>
<feature type="transmembrane region" description="Helical" evidence="1">
    <location>
        <begin position="43"/>
        <end position="63"/>
    </location>
</feature>
<feature type="transmembrane region" description="Helical" evidence="1">
    <location>
        <begin position="82"/>
        <end position="102"/>
    </location>
</feature>
<feature type="transmembrane region" description="Helical" evidence="1">
    <location>
        <begin position="141"/>
        <end position="161"/>
    </location>
</feature>
<feature type="transmembrane region" description="Helical" evidence="1">
    <location>
        <begin position="192"/>
        <end position="212"/>
    </location>
</feature>
<feature type="transmembrane region" description="Helical" evidence="1">
    <location>
        <begin position="216"/>
        <end position="236"/>
    </location>
</feature>
<feature type="transmembrane region" description="Helical" evidence="1">
    <location>
        <begin position="290"/>
        <end position="310"/>
    </location>
</feature>
<feature type="transmembrane region" description="Helical" evidence="1">
    <location>
        <begin position="316"/>
        <end position="336"/>
    </location>
</feature>
<feature type="transmembrane region" description="Helical" evidence="1">
    <location>
        <begin position="363"/>
        <end position="383"/>
    </location>
</feature>